<gene>
    <name evidence="1" type="primary">kdpC</name>
    <name type="ordered locus">Bcen_1674</name>
</gene>
<dbReference type="EMBL" id="CP000378">
    <property type="protein sequence ID" value="ABF76578.1"/>
    <property type="molecule type" value="Genomic_DNA"/>
</dbReference>
<dbReference type="SMR" id="Q1BUX7"/>
<dbReference type="HOGENOM" id="CLU_077094_2_0_4"/>
<dbReference type="GO" id="GO:0005886">
    <property type="term" value="C:plasma membrane"/>
    <property type="evidence" value="ECO:0007669"/>
    <property type="project" value="UniProtKB-SubCell"/>
</dbReference>
<dbReference type="GO" id="GO:0005524">
    <property type="term" value="F:ATP binding"/>
    <property type="evidence" value="ECO:0007669"/>
    <property type="project" value="UniProtKB-UniRule"/>
</dbReference>
<dbReference type="GO" id="GO:0008556">
    <property type="term" value="F:P-type potassium transmembrane transporter activity"/>
    <property type="evidence" value="ECO:0007669"/>
    <property type="project" value="InterPro"/>
</dbReference>
<dbReference type="HAMAP" id="MF_00276">
    <property type="entry name" value="KdpC"/>
    <property type="match status" value="1"/>
</dbReference>
<dbReference type="InterPro" id="IPR003820">
    <property type="entry name" value="KdpC"/>
</dbReference>
<dbReference type="NCBIfam" id="TIGR00681">
    <property type="entry name" value="kdpC"/>
    <property type="match status" value="1"/>
</dbReference>
<dbReference type="NCBIfam" id="NF001454">
    <property type="entry name" value="PRK00315.1"/>
    <property type="match status" value="1"/>
</dbReference>
<dbReference type="PANTHER" id="PTHR30042">
    <property type="entry name" value="POTASSIUM-TRANSPORTING ATPASE C CHAIN"/>
    <property type="match status" value="1"/>
</dbReference>
<dbReference type="PANTHER" id="PTHR30042:SF2">
    <property type="entry name" value="POTASSIUM-TRANSPORTING ATPASE KDPC SUBUNIT"/>
    <property type="match status" value="1"/>
</dbReference>
<dbReference type="Pfam" id="PF02669">
    <property type="entry name" value="KdpC"/>
    <property type="match status" value="1"/>
</dbReference>
<dbReference type="PIRSF" id="PIRSF001296">
    <property type="entry name" value="K_ATPase_KdpC"/>
    <property type="match status" value="1"/>
</dbReference>
<comment type="function">
    <text evidence="1">Part of the high-affinity ATP-driven potassium transport (or Kdp) system, which catalyzes the hydrolysis of ATP coupled with the electrogenic transport of potassium into the cytoplasm. This subunit acts as a catalytic chaperone that increases the ATP-binding affinity of the ATP-hydrolyzing subunit KdpB by the formation of a transient KdpB/KdpC/ATP ternary complex.</text>
</comment>
<comment type="subunit">
    <text evidence="1">The system is composed of three essential subunits: KdpA, KdpB and KdpC.</text>
</comment>
<comment type="subcellular location">
    <subcellularLocation>
        <location evidence="1">Cell inner membrane</location>
        <topology evidence="1">Single-pass membrane protein</topology>
    </subcellularLocation>
</comment>
<comment type="similarity">
    <text evidence="1">Belongs to the KdpC family.</text>
</comment>
<accession>Q1BUX7</accession>
<feature type="chain" id="PRO_1000022266" description="Potassium-transporting ATPase KdpC subunit">
    <location>
        <begin position="1"/>
        <end position="193"/>
    </location>
</feature>
<feature type="transmembrane region" description="Helical" evidence="1">
    <location>
        <begin position="7"/>
        <end position="27"/>
    </location>
</feature>
<evidence type="ECO:0000255" key="1">
    <source>
        <dbReference type="HAMAP-Rule" id="MF_00276"/>
    </source>
</evidence>
<keyword id="KW-0067">ATP-binding</keyword>
<keyword id="KW-0997">Cell inner membrane</keyword>
<keyword id="KW-1003">Cell membrane</keyword>
<keyword id="KW-0406">Ion transport</keyword>
<keyword id="KW-0472">Membrane</keyword>
<keyword id="KW-0547">Nucleotide-binding</keyword>
<keyword id="KW-0630">Potassium</keyword>
<keyword id="KW-0633">Potassium transport</keyword>
<keyword id="KW-0812">Transmembrane</keyword>
<keyword id="KW-1133">Transmembrane helix</keyword>
<keyword id="KW-0813">Transport</keyword>
<protein>
    <recommendedName>
        <fullName evidence="1">Potassium-transporting ATPase KdpC subunit</fullName>
    </recommendedName>
    <alternativeName>
        <fullName evidence="1">ATP phosphohydrolase [potassium-transporting] C chain</fullName>
    </alternativeName>
    <alternativeName>
        <fullName evidence="1">Potassium-binding and translocating subunit C</fullName>
    </alternativeName>
    <alternativeName>
        <fullName evidence="1">Potassium-translocating ATPase C chain</fullName>
    </alternativeName>
</protein>
<proteinExistence type="inferred from homology"/>
<name>KDPC_BURO1</name>
<reference key="1">
    <citation type="submission" date="2006-05" db="EMBL/GenBank/DDBJ databases">
        <title>Complete sequence of chromosome 1 of Burkholderia cenocepacia AU 1054.</title>
        <authorList>
            <consortium name="US DOE Joint Genome Institute"/>
            <person name="Copeland A."/>
            <person name="Lucas S."/>
            <person name="Lapidus A."/>
            <person name="Barry K."/>
            <person name="Detter J.C."/>
            <person name="Glavina del Rio T."/>
            <person name="Hammon N."/>
            <person name="Israni S."/>
            <person name="Dalin E."/>
            <person name="Tice H."/>
            <person name="Pitluck S."/>
            <person name="Chain P."/>
            <person name="Malfatti S."/>
            <person name="Shin M."/>
            <person name="Vergez L."/>
            <person name="Schmutz J."/>
            <person name="Larimer F."/>
            <person name="Land M."/>
            <person name="Hauser L."/>
            <person name="Kyrpides N."/>
            <person name="Lykidis A."/>
            <person name="LiPuma J.J."/>
            <person name="Konstantinidis K."/>
            <person name="Tiedje J.M."/>
            <person name="Richardson P."/>
        </authorList>
    </citation>
    <scope>NUCLEOTIDE SEQUENCE [LARGE SCALE GENOMIC DNA]</scope>
    <source>
        <strain>AU 1054</strain>
    </source>
</reference>
<sequence>MKSLIRPLVVLFVVLNAVTGLAYPAVMTVFGQAVFPSQANGSLIEQNGKVVGSALIGQPFDAPKYFWGRLSATAPMPYNAAGSGGSNLGPLNPSLADQVKARIAALRDAGTDLSKPVPVDLVTASASGLDPEITPAAAAYQVERVAKARNLTPDAVAQLVAANTTGRQFGVLGEPRVNVLKLNLALDAAQAAH</sequence>
<organism>
    <name type="scientific">Burkholderia orbicola (strain AU 1054)</name>
    <dbReference type="NCBI Taxonomy" id="331271"/>
    <lineage>
        <taxon>Bacteria</taxon>
        <taxon>Pseudomonadati</taxon>
        <taxon>Pseudomonadota</taxon>
        <taxon>Betaproteobacteria</taxon>
        <taxon>Burkholderiales</taxon>
        <taxon>Burkholderiaceae</taxon>
        <taxon>Burkholderia</taxon>
        <taxon>Burkholderia cepacia complex</taxon>
        <taxon>Burkholderia orbicola</taxon>
    </lineage>
</organism>